<evidence type="ECO:0000250" key="1"/>
<evidence type="ECO:0000250" key="2">
    <source>
        <dbReference type="UniProtKB" id="Q9N2V6"/>
    </source>
</evidence>
<evidence type="ECO:0000255" key="3"/>
<evidence type="ECO:0000255" key="4">
    <source>
        <dbReference type="PROSITE-ProRule" id="PRU01230"/>
    </source>
</evidence>
<evidence type="ECO:0000305" key="5"/>
<organism>
    <name type="scientific">Caenorhabditis briggsae</name>
    <dbReference type="NCBI Taxonomy" id="6238"/>
    <lineage>
        <taxon>Eukaryota</taxon>
        <taxon>Metazoa</taxon>
        <taxon>Ecdysozoa</taxon>
        <taxon>Nematoda</taxon>
        <taxon>Chromadorea</taxon>
        <taxon>Rhabditida</taxon>
        <taxon>Rhabditina</taxon>
        <taxon>Rhabditomorpha</taxon>
        <taxon>Rhabditoidea</taxon>
        <taxon>Rhabditidae</taxon>
        <taxon>Peloderinae</taxon>
        <taxon>Caenorhabditis</taxon>
    </lineage>
</organism>
<reference key="1">
    <citation type="journal article" date="2005" name="Mol. Genet. Genomics">
        <title>Functional constraint and divergence in the G protein family in Caenorhabditis elegans and Caenorhabditis briggsae.</title>
        <authorList>
            <person name="Jovelin R."/>
            <person name="Phillips P.C."/>
        </authorList>
    </citation>
    <scope>NUCLEOTIDE SEQUENCE [GENOMIC DNA]</scope>
    <source>
        <strain>AF16</strain>
    </source>
</reference>
<reference key="2">
    <citation type="journal article" date="2003" name="PLoS Biol.">
        <title>The genome sequence of Caenorhabditis briggsae: a platform for comparative genomics.</title>
        <authorList>
            <person name="Stein L.D."/>
            <person name="Bao Z."/>
            <person name="Blasiar D."/>
            <person name="Blumenthal T."/>
            <person name="Brent M.R."/>
            <person name="Chen N."/>
            <person name="Chinwalla A."/>
            <person name="Clarke L."/>
            <person name="Clee C."/>
            <person name="Coghlan A."/>
            <person name="Coulson A."/>
            <person name="D'Eustachio P."/>
            <person name="Fitch D.H.A."/>
            <person name="Fulton L.A."/>
            <person name="Fulton R.E."/>
            <person name="Griffiths-Jones S."/>
            <person name="Harris T.W."/>
            <person name="Hillier L.W."/>
            <person name="Kamath R."/>
            <person name="Kuwabara P.E."/>
            <person name="Mardis E.R."/>
            <person name="Marra M.A."/>
            <person name="Miner T.L."/>
            <person name="Minx P."/>
            <person name="Mullikin J.C."/>
            <person name="Plumb R.W."/>
            <person name="Rogers J."/>
            <person name="Schein J.E."/>
            <person name="Sohrmann M."/>
            <person name="Spieth J."/>
            <person name="Stajich J.E."/>
            <person name="Wei C."/>
            <person name="Willey D."/>
            <person name="Wilson R.K."/>
            <person name="Durbin R.M."/>
            <person name="Waterston R.H."/>
        </authorList>
    </citation>
    <scope>NUCLEOTIDE SEQUENCE [LARGE SCALE GENOMIC DNA]</scope>
    <source>
        <strain>AF16</strain>
    </source>
</reference>
<name>GPA16_CAEBR</name>
<feature type="initiator methionine" description="Removed" evidence="3">
    <location>
        <position position="1"/>
    </location>
</feature>
<feature type="chain" id="PRO_0000203656" description="Guanine nucleotide-binding protein alpha-16 subunit">
    <location>
        <begin position="2"/>
        <end position="354"/>
    </location>
</feature>
<feature type="domain" description="G-alpha" evidence="4">
    <location>
        <begin position="31"/>
        <end position="354"/>
    </location>
</feature>
<feature type="region of interest" description="G1 motif" evidence="4">
    <location>
        <begin position="34"/>
        <end position="47"/>
    </location>
</feature>
<feature type="region of interest" description="G2 motif" evidence="4">
    <location>
        <begin position="172"/>
        <end position="180"/>
    </location>
</feature>
<feature type="region of interest" description="G3 motif" evidence="4">
    <location>
        <begin position="195"/>
        <end position="204"/>
    </location>
</feature>
<feature type="region of interest" description="G4 motif" evidence="4">
    <location>
        <begin position="264"/>
        <end position="271"/>
    </location>
</feature>
<feature type="region of interest" description="G5 motif" evidence="4">
    <location>
        <begin position="324"/>
        <end position="329"/>
    </location>
</feature>
<feature type="binding site" evidence="1">
    <location>
        <begin position="39"/>
        <end position="46"/>
    </location>
    <ligand>
        <name>GTP</name>
        <dbReference type="ChEBI" id="CHEBI:37565"/>
    </ligand>
</feature>
<feature type="binding site" evidence="1">
    <location>
        <position position="46"/>
    </location>
    <ligand>
        <name>Mg(2+)</name>
        <dbReference type="ChEBI" id="CHEBI:18420"/>
    </ligand>
</feature>
<feature type="binding site" evidence="1">
    <location>
        <begin position="174"/>
        <end position="180"/>
    </location>
    <ligand>
        <name>GTP</name>
        <dbReference type="ChEBI" id="CHEBI:37565"/>
    </ligand>
</feature>
<feature type="binding site" evidence="1">
    <location>
        <position position="180"/>
    </location>
    <ligand>
        <name>Mg(2+)</name>
        <dbReference type="ChEBI" id="CHEBI:18420"/>
    </ligand>
</feature>
<feature type="binding site" evidence="1">
    <location>
        <begin position="199"/>
        <end position="203"/>
    </location>
    <ligand>
        <name>GTP</name>
        <dbReference type="ChEBI" id="CHEBI:37565"/>
    </ligand>
</feature>
<feature type="binding site" evidence="1">
    <location>
        <begin position="268"/>
        <end position="271"/>
    </location>
    <ligand>
        <name>GTP</name>
        <dbReference type="ChEBI" id="CHEBI:37565"/>
    </ligand>
</feature>
<feature type="binding site" evidence="1">
    <location>
        <position position="326"/>
    </location>
    <ligand>
        <name>GTP</name>
        <dbReference type="ChEBI" id="CHEBI:37565"/>
    </ligand>
</feature>
<feature type="lipid moiety-binding region" description="N-myristoyl glycine" evidence="3">
    <location>
        <position position="2"/>
    </location>
</feature>
<feature type="lipid moiety-binding region" description="S-palmitoyl cysteine" evidence="3">
    <location>
        <position position="3"/>
    </location>
</feature>
<sequence>MGCIMSQTDDAASRSKKIDRLLKEDQENANKTVKLLLLGAGESGKSTILKQMRIIHDVGYTKDERRVFRSVVFGNIILSLNAIIAAMEQLKIEYEKEEHRADARKVLAFGATGEEDEIPDELAALMKSVWSDEGIQKAVARSREYQLNDSAEYYLSQLDRICEADYIPTQDDVLRTRIKTTGIVETQFIFKDRLFVVFDVGGQRSERKKWIHCFEDVTALIFCVAMSEYDMVLMEDRKTNRMRESLKVFDSICNSKWFVETSIILFLNKKDLFEEKIKKSPLTYCFPEYTGHDNFDDGSAFIQKQFEIVNKRQGGQKEIYTQFTCATDTNNIRFVFDAVTDIVIRDNLRTCGLY</sequence>
<comment type="function">
    <text evidence="2">Guanine nucleotide-binding proteins (G proteins) are involved as modulators or transducers in various transmembrane signaling systems. In the 1-cell embryo, probably together with goa-1, controls nuclear rotation and spindle elongation during mitosis. During the first embryonic cell divisons, plays a role in gpr-1/2 cortical localization and in the proper orientation of EMS blastomere mitotic spindle.</text>
</comment>
<comment type="subunit">
    <text>G proteins are composed of 3 units; alpha, beta and gamma. The alpha chain contains the guanine nucleotide binding site.</text>
</comment>
<comment type="similarity">
    <text evidence="5">Belongs to the G-alpha family.</text>
</comment>
<protein>
    <recommendedName>
        <fullName>Guanine nucleotide-binding protein alpha-16 subunit</fullName>
    </recommendedName>
</protein>
<dbReference type="EMBL" id="AY634294">
    <property type="protein sequence ID" value="AAW02900.1"/>
    <property type="molecule type" value="Genomic_DNA"/>
</dbReference>
<dbReference type="EMBL" id="HE601270">
    <property type="protein sequence ID" value="CAP35975.1"/>
    <property type="molecule type" value="Genomic_DNA"/>
</dbReference>
<dbReference type="SMR" id="Q60XS3"/>
<dbReference type="FunCoup" id="Q60XS3">
    <property type="interactions" value="956"/>
</dbReference>
<dbReference type="STRING" id="6238.Q60XS3"/>
<dbReference type="EnsemblMetazoa" id="CBG18548.1">
    <property type="protein sequence ID" value="CBG18548.1"/>
    <property type="gene ID" value="WBGene00037945"/>
</dbReference>
<dbReference type="KEGG" id="cbr:CBG_18548"/>
<dbReference type="CTD" id="8580742"/>
<dbReference type="WormBase" id="CBG18548">
    <property type="protein sequence ID" value="CBP04382"/>
    <property type="gene ID" value="WBGene00037945"/>
    <property type="gene designation" value="Cbr-gpa-16"/>
</dbReference>
<dbReference type="eggNOG" id="KOG0082">
    <property type="taxonomic scope" value="Eukaryota"/>
</dbReference>
<dbReference type="HOGENOM" id="CLU_014184_6_0_1"/>
<dbReference type="InParanoid" id="Q60XS3"/>
<dbReference type="OMA" id="MRIIHDV"/>
<dbReference type="Proteomes" id="UP000008549">
    <property type="component" value="Unassembled WGS sequence"/>
</dbReference>
<dbReference type="GO" id="GO:0005737">
    <property type="term" value="C:cytoplasm"/>
    <property type="evidence" value="ECO:0000318"/>
    <property type="project" value="GO_Central"/>
</dbReference>
<dbReference type="GO" id="GO:0005834">
    <property type="term" value="C:heterotrimeric G-protein complex"/>
    <property type="evidence" value="ECO:0000318"/>
    <property type="project" value="GO_Central"/>
</dbReference>
<dbReference type="GO" id="GO:0001664">
    <property type="term" value="F:G protein-coupled receptor binding"/>
    <property type="evidence" value="ECO:0000318"/>
    <property type="project" value="GO_Central"/>
</dbReference>
<dbReference type="GO" id="GO:0031683">
    <property type="term" value="F:G-protein beta/gamma-subunit complex binding"/>
    <property type="evidence" value="ECO:0000318"/>
    <property type="project" value="GO_Central"/>
</dbReference>
<dbReference type="GO" id="GO:0005525">
    <property type="term" value="F:GTP binding"/>
    <property type="evidence" value="ECO:0007669"/>
    <property type="project" value="UniProtKB-KW"/>
</dbReference>
<dbReference type="GO" id="GO:0003924">
    <property type="term" value="F:GTPase activity"/>
    <property type="evidence" value="ECO:0000318"/>
    <property type="project" value="GO_Central"/>
</dbReference>
<dbReference type="GO" id="GO:0046872">
    <property type="term" value="F:metal ion binding"/>
    <property type="evidence" value="ECO:0007669"/>
    <property type="project" value="UniProtKB-KW"/>
</dbReference>
<dbReference type="GO" id="GO:0007188">
    <property type="term" value="P:adenylate cyclase-modulating G protein-coupled receptor signaling pathway"/>
    <property type="evidence" value="ECO:0000318"/>
    <property type="project" value="GO_Central"/>
</dbReference>
<dbReference type="GO" id="GO:0051301">
    <property type="term" value="P:cell division"/>
    <property type="evidence" value="ECO:0007669"/>
    <property type="project" value="UniProtKB-KW"/>
</dbReference>
<dbReference type="CDD" id="cd00066">
    <property type="entry name" value="G-alpha"/>
    <property type="match status" value="1"/>
</dbReference>
<dbReference type="FunFam" id="3.40.50.300:FF:002307">
    <property type="entry name" value="Guanine nucleotide-binding protein G(k) subunit alpha"/>
    <property type="match status" value="1"/>
</dbReference>
<dbReference type="FunFam" id="1.10.400.10:FF:000002">
    <property type="entry name" value="guanine nucleotide-binding protein G(Q) subunit alpha"/>
    <property type="match status" value="1"/>
</dbReference>
<dbReference type="FunFam" id="3.40.50.300:FF:000692">
    <property type="entry name" value="Guanine nucleotide-binding protein subunit alpha"/>
    <property type="match status" value="1"/>
</dbReference>
<dbReference type="Gene3D" id="1.10.400.10">
    <property type="entry name" value="GI Alpha 1, domain 2-like"/>
    <property type="match status" value="1"/>
</dbReference>
<dbReference type="Gene3D" id="3.40.50.300">
    <property type="entry name" value="P-loop containing nucleotide triphosphate hydrolases"/>
    <property type="match status" value="1"/>
</dbReference>
<dbReference type="InterPro" id="IPR001408">
    <property type="entry name" value="Gprotein_alpha_I"/>
</dbReference>
<dbReference type="InterPro" id="IPR001019">
    <property type="entry name" value="Gprotein_alpha_su"/>
</dbReference>
<dbReference type="InterPro" id="IPR011025">
    <property type="entry name" value="GproteinA_insert"/>
</dbReference>
<dbReference type="InterPro" id="IPR027417">
    <property type="entry name" value="P-loop_NTPase"/>
</dbReference>
<dbReference type="PANTHER" id="PTHR10218:SF227">
    <property type="entry name" value="G PROTEIN ALPHA I SUBUNIT"/>
    <property type="match status" value="1"/>
</dbReference>
<dbReference type="PANTHER" id="PTHR10218">
    <property type="entry name" value="GTP-BINDING PROTEIN ALPHA SUBUNIT"/>
    <property type="match status" value="1"/>
</dbReference>
<dbReference type="Pfam" id="PF00503">
    <property type="entry name" value="G-alpha"/>
    <property type="match status" value="1"/>
</dbReference>
<dbReference type="PRINTS" id="PR00318">
    <property type="entry name" value="GPROTEINA"/>
</dbReference>
<dbReference type="PRINTS" id="PR00441">
    <property type="entry name" value="GPROTEINAI"/>
</dbReference>
<dbReference type="SMART" id="SM00275">
    <property type="entry name" value="G_alpha"/>
    <property type="match status" value="1"/>
</dbReference>
<dbReference type="SUPFAM" id="SSF52540">
    <property type="entry name" value="P-loop containing nucleoside triphosphate hydrolases"/>
    <property type="match status" value="1"/>
</dbReference>
<dbReference type="SUPFAM" id="SSF47895">
    <property type="entry name" value="Transducin (alpha subunit), insertion domain"/>
    <property type="match status" value="1"/>
</dbReference>
<dbReference type="PROSITE" id="PS51882">
    <property type="entry name" value="G_ALPHA"/>
    <property type="match status" value="1"/>
</dbReference>
<accession>Q60XS3</accession>
<accession>A8XTJ8</accession>
<gene>
    <name type="primary">gpa-16</name>
    <name type="ORF">CBG18548</name>
</gene>
<keyword id="KW-0131">Cell cycle</keyword>
<keyword id="KW-0132">Cell division</keyword>
<keyword id="KW-0342">GTP-binding</keyword>
<keyword id="KW-0449">Lipoprotein</keyword>
<keyword id="KW-0460">Magnesium</keyword>
<keyword id="KW-0479">Metal-binding</keyword>
<keyword id="KW-0498">Mitosis</keyword>
<keyword id="KW-0519">Myristate</keyword>
<keyword id="KW-0547">Nucleotide-binding</keyword>
<keyword id="KW-0564">Palmitate</keyword>
<keyword id="KW-1185">Reference proteome</keyword>
<keyword id="KW-0807">Transducer</keyword>
<proteinExistence type="inferred from homology"/>